<proteinExistence type="inferred from homology"/>
<accession>Q7UH05</accession>
<name>ATPA1_RHOBA</name>
<keyword id="KW-0066">ATP synthesis</keyword>
<keyword id="KW-0067">ATP-binding</keyword>
<keyword id="KW-0997">Cell inner membrane</keyword>
<keyword id="KW-1003">Cell membrane</keyword>
<keyword id="KW-0139">CF(1)</keyword>
<keyword id="KW-0375">Hydrogen ion transport</keyword>
<keyword id="KW-0406">Ion transport</keyword>
<keyword id="KW-0472">Membrane</keyword>
<keyword id="KW-0547">Nucleotide-binding</keyword>
<keyword id="KW-1185">Reference proteome</keyword>
<keyword id="KW-1278">Translocase</keyword>
<keyword id="KW-0813">Transport</keyword>
<comment type="function">
    <text evidence="1">Produces ATP from ADP in the presence of a proton gradient across the membrane. The alpha chain is a regulatory subunit.</text>
</comment>
<comment type="catalytic activity">
    <reaction evidence="1">
        <text>ATP + H2O + 4 H(+)(in) = ADP + phosphate + 5 H(+)(out)</text>
        <dbReference type="Rhea" id="RHEA:57720"/>
        <dbReference type="ChEBI" id="CHEBI:15377"/>
        <dbReference type="ChEBI" id="CHEBI:15378"/>
        <dbReference type="ChEBI" id="CHEBI:30616"/>
        <dbReference type="ChEBI" id="CHEBI:43474"/>
        <dbReference type="ChEBI" id="CHEBI:456216"/>
        <dbReference type="EC" id="7.1.2.2"/>
    </reaction>
</comment>
<comment type="subunit">
    <text evidence="1">F-type ATPases have 2 components, CF(1) - the catalytic core - and CF(0) - the membrane proton channel. CF(1) has five subunits: alpha(3), beta(3), gamma(1), delta(1), epsilon(1). CF(0) has three main subunits: a(1), b(2) and c(9-12). The alpha and beta chains form an alternating ring which encloses part of the gamma chain. CF(1) is attached to CF(0) by a central stalk formed by the gamma and epsilon chains, while a peripheral stalk is formed by the delta and b chains.</text>
</comment>
<comment type="subcellular location">
    <subcellularLocation>
        <location evidence="1">Cell inner membrane</location>
        <topology evidence="1">Peripheral membrane protein</topology>
    </subcellularLocation>
</comment>
<comment type="similarity">
    <text evidence="1">Belongs to the ATPase alpha/beta chains family.</text>
</comment>
<comment type="sequence caution" evidence="2">
    <conflict type="erroneous initiation">
        <sequence resource="EMBL-CDS" id="CAD78174"/>
    </conflict>
</comment>
<protein>
    <recommendedName>
        <fullName evidence="1">ATP synthase subunit alpha 1</fullName>
        <ecNumber evidence="1">7.1.2.2</ecNumber>
    </recommendedName>
    <alternativeName>
        <fullName evidence="1">ATP synthase F1 sector subunit alpha 1</fullName>
    </alternativeName>
    <alternativeName>
        <fullName evidence="1">F-ATPase subunit alpha 1</fullName>
    </alternativeName>
</protein>
<organism>
    <name type="scientific">Rhodopirellula baltica (strain DSM 10527 / NCIMB 13988 / SH1)</name>
    <dbReference type="NCBI Taxonomy" id="243090"/>
    <lineage>
        <taxon>Bacteria</taxon>
        <taxon>Pseudomonadati</taxon>
        <taxon>Planctomycetota</taxon>
        <taxon>Planctomycetia</taxon>
        <taxon>Pirellulales</taxon>
        <taxon>Pirellulaceae</taxon>
        <taxon>Rhodopirellula</taxon>
    </lineage>
</organism>
<sequence length="504" mass="54920">MTTYSETLETAAQQFDQAVKSQPSQLTVTEIGTVEEVQRGIARVHGLPHVQVDEVLRFAGGHLGYAFNLDPDQVGCVLLDSSDQITAGSRVERMHSVLDTPVGDQLLGRVVDPVGRPLDGGRSLDDLPREPCERDAPPIMQRAPVTVPLQSGLKVVDAMIPIGRGQRQLLLGDRQTGKTAIAIDTIINQLGRDVICIYCSIGQRSTGVARVIENLRRHDALDHTIVVIGADDAPPGLQFLAPYAATTMGEHFMRQGRDVMIVYDDLTSHARAYRHLSLLLRRPPGREAFPGDIFYVHSRLLERSTHLIQSAGGGSLTALPIIETEAQNVSAYIPTNLISITDGQIYLSPTLFRKGVLPAIDVGRSVSRVGGKTQLPAYRVVAGDLRLTYSQFEELERFARFSSQLDEDTRATLDRGRLIREILKQTQFQPLTLPQQIASLIAVTNGVLDGVPVDQLPTIERAIQDAVTSQANDLCAQMQSGKKLDKQQVGQIANIAAGAVHAHA</sequence>
<gene>
    <name evidence="1" type="primary">atpA1</name>
    <name type="ordered locus">RB4916</name>
</gene>
<feature type="chain" id="PRO_0000238341" description="ATP synthase subunit alpha 1">
    <location>
        <begin position="1"/>
        <end position="504"/>
    </location>
</feature>
<feature type="binding site" evidence="1">
    <location>
        <begin position="172"/>
        <end position="179"/>
    </location>
    <ligand>
        <name>ATP</name>
        <dbReference type="ChEBI" id="CHEBI:30616"/>
    </ligand>
</feature>
<feature type="site" description="Required for activity" evidence="1">
    <location>
        <position position="365"/>
    </location>
</feature>
<evidence type="ECO:0000255" key="1">
    <source>
        <dbReference type="HAMAP-Rule" id="MF_01346"/>
    </source>
</evidence>
<evidence type="ECO:0000305" key="2"/>
<reference key="1">
    <citation type="journal article" date="2003" name="Proc. Natl. Acad. Sci. U.S.A.">
        <title>Complete genome sequence of the marine planctomycete Pirellula sp. strain 1.</title>
        <authorList>
            <person name="Gloeckner F.O."/>
            <person name="Kube M."/>
            <person name="Bauer M."/>
            <person name="Teeling H."/>
            <person name="Lombardot T."/>
            <person name="Ludwig W."/>
            <person name="Gade D."/>
            <person name="Beck A."/>
            <person name="Borzym K."/>
            <person name="Heitmann K."/>
            <person name="Rabus R."/>
            <person name="Schlesner H."/>
            <person name="Amann R."/>
            <person name="Reinhardt R."/>
        </authorList>
    </citation>
    <scope>NUCLEOTIDE SEQUENCE [LARGE SCALE GENOMIC DNA]</scope>
    <source>
        <strain>DSM 10527 / NCIMB 13988 / SH1</strain>
    </source>
</reference>
<dbReference type="EC" id="7.1.2.2" evidence="1"/>
<dbReference type="EMBL" id="BX294141">
    <property type="protein sequence ID" value="CAD78174.1"/>
    <property type="status" value="ALT_INIT"/>
    <property type="molecule type" value="Genomic_DNA"/>
</dbReference>
<dbReference type="RefSeq" id="NP_866393.2">
    <property type="nucleotide sequence ID" value="NC_005027.1"/>
</dbReference>
<dbReference type="RefSeq" id="WP_164921807.1">
    <property type="nucleotide sequence ID" value="NC_005027.1"/>
</dbReference>
<dbReference type="SMR" id="Q7UH05"/>
<dbReference type="STRING" id="243090.RB4916"/>
<dbReference type="EnsemblBacteria" id="CAD78174">
    <property type="protein sequence ID" value="CAD78174"/>
    <property type="gene ID" value="RB4916"/>
</dbReference>
<dbReference type="KEGG" id="rba:RB4916"/>
<dbReference type="PATRIC" id="fig|243090.15.peg.2340"/>
<dbReference type="eggNOG" id="COG0056">
    <property type="taxonomic scope" value="Bacteria"/>
</dbReference>
<dbReference type="HOGENOM" id="CLU_010091_2_1_0"/>
<dbReference type="InParanoid" id="Q7UH05"/>
<dbReference type="OrthoDB" id="9803053at2"/>
<dbReference type="Proteomes" id="UP000001025">
    <property type="component" value="Chromosome"/>
</dbReference>
<dbReference type="GO" id="GO:0005886">
    <property type="term" value="C:plasma membrane"/>
    <property type="evidence" value="ECO:0007669"/>
    <property type="project" value="UniProtKB-SubCell"/>
</dbReference>
<dbReference type="GO" id="GO:0045259">
    <property type="term" value="C:proton-transporting ATP synthase complex"/>
    <property type="evidence" value="ECO:0007669"/>
    <property type="project" value="UniProtKB-KW"/>
</dbReference>
<dbReference type="GO" id="GO:0043531">
    <property type="term" value="F:ADP binding"/>
    <property type="evidence" value="ECO:0000318"/>
    <property type="project" value="GO_Central"/>
</dbReference>
<dbReference type="GO" id="GO:0005524">
    <property type="term" value="F:ATP binding"/>
    <property type="evidence" value="ECO:0000318"/>
    <property type="project" value="GO_Central"/>
</dbReference>
<dbReference type="GO" id="GO:0046933">
    <property type="term" value="F:proton-transporting ATP synthase activity, rotational mechanism"/>
    <property type="evidence" value="ECO:0007669"/>
    <property type="project" value="UniProtKB-UniRule"/>
</dbReference>
<dbReference type="GO" id="GO:0015986">
    <property type="term" value="P:proton motive force-driven ATP synthesis"/>
    <property type="evidence" value="ECO:0000318"/>
    <property type="project" value="GO_Central"/>
</dbReference>
<dbReference type="CDD" id="cd18113">
    <property type="entry name" value="ATP-synt_F1_alpha_C"/>
    <property type="match status" value="1"/>
</dbReference>
<dbReference type="CDD" id="cd18116">
    <property type="entry name" value="ATP-synt_F1_alpha_N"/>
    <property type="match status" value="1"/>
</dbReference>
<dbReference type="CDD" id="cd01132">
    <property type="entry name" value="F1-ATPase_alpha_CD"/>
    <property type="match status" value="1"/>
</dbReference>
<dbReference type="FunFam" id="3.40.50.300:FF:000002">
    <property type="entry name" value="ATP synthase subunit alpha"/>
    <property type="match status" value="1"/>
</dbReference>
<dbReference type="FunFam" id="1.20.150.20:FF:000004">
    <property type="entry name" value="ATP synthase subunit alpha, mitochondrial"/>
    <property type="match status" value="1"/>
</dbReference>
<dbReference type="Gene3D" id="2.40.30.20">
    <property type="match status" value="1"/>
</dbReference>
<dbReference type="Gene3D" id="1.20.150.20">
    <property type="entry name" value="ATP synthase alpha/beta chain, C-terminal domain"/>
    <property type="match status" value="1"/>
</dbReference>
<dbReference type="Gene3D" id="3.40.50.300">
    <property type="entry name" value="P-loop containing nucleotide triphosphate hydrolases"/>
    <property type="match status" value="1"/>
</dbReference>
<dbReference type="HAMAP" id="MF_01346">
    <property type="entry name" value="ATP_synth_alpha_bact"/>
    <property type="match status" value="1"/>
</dbReference>
<dbReference type="InterPro" id="IPR017710">
    <property type="entry name" value="Alt_ATP_synth_F1_asu"/>
</dbReference>
<dbReference type="InterPro" id="IPR023366">
    <property type="entry name" value="ATP_synth_asu-like_sf"/>
</dbReference>
<dbReference type="InterPro" id="IPR000793">
    <property type="entry name" value="ATP_synth_asu_C"/>
</dbReference>
<dbReference type="InterPro" id="IPR038376">
    <property type="entry name" value="ATP_synth_asu_C_sf"/>
</dbReference>
<dbReference type="InterPro" id="IPR033732">
    <property type="entry name" value="ATP_synth_F1_a_nt-bd_dom"/>
</dbReference>
<dbReference type="InterPro" id="IPR005294">
    <property type="entry name" value="ATP_synth_F1_asu"/>
</dbReference>
<dbReference type="InterPro" id="IPR020003">
    <property type="entry name" value="ATPase_a/bsu_AS"/>
</dbReference>
<dbReference type="InterPro" id="IPR004100">
    <property type="entry name" value="ATPase_F1/V1/A1_a/bsu_N"/>
</dbReference>
<dbReference type="InterPro" id="IPR036121">
    <property type="entry name" value="ATPase_F1/V1/A1_a/bsu_N_sf"/>
</dbReference>
<dbReference type="InterPro" id="IPR000194">
    <property type="entry name" value="ATPase_F1/V1/A1_a/bsu_nucl-bd"/>
</dbReference>
<dbReference type="InterPro" id="IPR027417">
    <property type="entry name" value="P-loop_NTPase"/>
</dbReference>
<dbReference type="NCBIfam" id="TIGR03324">
    <property type="entry name" value="alt_F1F0_F1_al"/>
    <property type="match status" value="1"/>
</dbReference>
<dbReference type="NCBIfam" id="TIGR00962">
    <property type="entry name" value="atpA"/>
    <property type="match status" value="1"/>
</dbReference>
<dbReference type="NCBIfam" id="NF009884">
    <property type="entry name" value="PRK13343.1"/>
    <property type="match status" value="1"/>
</dbReference>
<dbReference type="PANTHER" id="PTHR48082">
    <property type="entry name" value="ATP SYNTHASE SUBUNIT ALPHA, MITOCHONDRIAL"/>
    <property type="match status" value="1"/>
</dbReference>
<dbReference type="PANTHER" id="PTHR48082:SF2">
    <property type="entry name" value="ATP SYNTHASE SUBUNIT ALPHA, MITOCHONDRIAL"/>
    <property type="match status" value="1"/>
</dbReference>
<dbReference type="Pfam" id="PF00006">
    <property type="entry name" value="ATP-synt_ab"/>
    <property type="match status" value="1"/>
</dbReference>
<dbReference type="Pfam" id="PF00306">
    <property type="entry name" value="ATP-synt_ab_C"/>
    <property type="match status" value="1"/>
</dbReference>
<dbReference type="Pfam" id="PF02874">
    <property type="entry name" value="ATP-synt_ab_N"/>
    <property type="match status" value="1"/>
</dbReference>
<dbReference type="SUPFAM" id="SSF47917">
    <property type="entry name" value="C-terminal domain of alpha and beta subunits of F1 ATP synthase"/>
    <property type="match status" value="1"/>
</dbReference>
<dbReference type="SUPFAM" id="SSF50615">
    <property type="entry name" value="N-terminal domain of alpha and beta subunits of F1 ATP synthase"/>
    <property type="match status" value="1"/>
</dbReference>
<dbReference type="SUPFAM" id="SSF52540">
    <property type="entry name" value="P-loop containing nucleoside triphosphate hydrolases"/>
    <property type="match status" value="1"/>
</dbReference>
<dbReference type="PROSITE" id="PS00152">
    <property type="entry name" value="ATPASE_ALPHA_BETA"/>
    <property type="match status" value="1"/>
</dbReference>